<feature type="chain" id="PRO_0000291171" description="UPF0434 protein YcaR">
    <location>
        <begin position="1"/>
        <end position="60"/>
    </location>
</feature>
<protein>
    <recommendedName>
        <fullName evidence="1">UPF0434 protein YcaR</fullName>
    </recommendedName>
</protein>
<organism>
    <name type="scientific">Shigella boydii serotype 4 (strain Sb227)</name>
    <dbReference type="NCBI Taxonomy" id="300268"/>
    <lineage>
        <taxon>Bacteria</taxon>
        <taxon>Pseudomonadati</taxon>
        <taxon>Pseudomonadota</taxon>
        <taxon>Gammaproteobacteria</taxon>
        <taxon>Enterobacterales</taxon>
        <taxon>Enterobacteriaceae</taxon>
        <taxon>Shigella</taxon>
    </lineage>
</organism>
<proteinExistence type="inferred from homology"/>
<name>YCAR_SHIBS</name>
<reference key="1">
    <citation type="journal article" date="2005" name="Nucleic Acids Res.">
        <title>Genome dynamics and diversity of Shigella species, the etiologic agents of bacillary dysentery.</title>
        <authorList>
            <person name="Yang F."/>
            <person name="Yang J."/>
            <person name="Zhang X."/>
            <person name="Chen L."/>
            <person name="Jiang Y."/>
            <person name="Yan Y."/>
            <person name="Tang X."/>
            <person name="Wang J."/>
            <person name="Xiong Z."/>
            <person name="Dong J."/>
            <person name="Xue Y."/>
            <person name="Zhu Y."/>
            <person name="Xu X."/>
            <person name="Sun L."/>
            <person name="Chen S."/>
            <person name="Nie H."/>
            <person name="Peng J."/>
            <person name="Xu J."/>
            <person name="Wang Y."/>
            <person name="Yuan Z."/>
            <person name="Wen Y."/>
            <person name="Yao Z."/>
            <person name="Shen Y."/>
            <person name="Qiang B."/>
            <person name="Hou Y."/>
            <person name="Yu J."/>
            <person name="Jin Q."/>
        </authorList>
    </citation>
    <scope>NUCLEOTIDE SEQUENCE [LARGE SCALE GENOMIC DNA]</scope>
    <source>
        <strain>Sb227</strain>
    </source>
</reference>
<comment type="similarity">
    <text evidence="1">Belongs to the UPF0434 family.</text>
</comment>
<dbReference type="EMBL" id="CP000036">
    <property type="protein sequence ID" value="ABB66775.1"/>
    <property type="molecule type" value="Genomic_DNA"/>
</dbReference>
<dbReference type="RefSeq" id="WP_000350058.1">
    <property type="nucleotide sequence ID" value="NC_007613.1"/>
</dbReference>
<dbReference type="SMR" id="Q31YT3"/>
<dbReference type="GeneID" id="93776498"/>
<dbReference type="KEGG" id="sbo:SBO_2205"/>
<dbReference type="HOGENOM" id="CLU_155659_3_1_6"/>
<dbReference type="Proteomes" id="UP000007067">
    <property type="component" value="Chromosome"/>
</dbReference>
<dbReference type="GO" id="GO:0005829">
    <property type="term" value="C:cytosol"/>
    <property type="evidence" value="ECO:0007669"/>
    <property type="project" value="TreeGrafter"/>
</dbReference>
<dbReference type="FunFam" id="2.20.25.10:FF:000002">
    <property type="entry name" value="UPF0434 protein YcaR"/>
    <property type="match status" value="1"/>
</dbReference>
<dbReference type="Gene3D" id="2.20.25.10">
    <property type="match status" value="1"/>
</dbReference>
<dbReference type="HAMAP" id="MF_01187">
    <property type="entry name" value="UPF0434"/>
    <property type="match status" value="1"/>
</dbReference>
<dbReference type="InterPro" id="IPR005651">
    <property type="entry name" value="Trm112-like"/>
</dbReference>
<dbReference type="NCBIfam" id="NF008806">
    <property type="entry name" value="PRK11827.1"/>
    <property type="match status" value="1"/>
</dbReference>
<dbReference type="PANTHER" id="PTHR33505:SF4">
    <property type="entry name" value="PROTEIN PREY, MITOCHONDRIAL"/>
    <property type="match status" value="1"/>
</dbReference>
<dbReference type="PANTHER" id="PTHR33505">
    <property type="entry name" value="ZGC:162634"/>
    <property type="match status" value="1"/>
</dbReference>
<dbReference type="Pfam" id="PF03966">
    <property type="entry name" value="Trm112p"/>
    <property type="match status" value="1"/>
</dbReference>
<dbReference type="SUPFAM" id="SSF158997">
    <property type="entry name" value="Trm112p-like"/>
    <property type="match status" value="1"/>
</dbReference>
<gene>
    <name evidence="1" type="primary">ycaR</name>
    <name type="ordered locus">SBO_2205</name>
</gene>
<accession>Q31YT3</accession>
<evidence type="ECO:0000255" key="1">
    <source>
        <dbReference type="HAMAP-Rule" id="MF_01187"/>
    </source>
</evidence>
<sequence length="60" mass="6855">MDHRLLEIIACPVCNGKLWYNQEKQELICKLDNLAFPLRDGIPVLLETEARVLTADESKS</sequence>